<evidence type="ECO:0000250" key="1">
    <source>
        <dbReference type="UniProtKB" id="U5T880"/>
    </source>
</evidence>
<evidence type="ECO:0000305" key="2"/>
<dbReference type="PIR" id="S10602">
    <property type="entry name" value="S10602"/>
</dbReference>
<dbReference type="SMR" id="P23815"/>
<dbReference type="GO" id="GO:0009535">
    <property type="term" value="C:chloroplast thylakoid membrane"/>
    <property type="evidence" value="ECO:0007669"/>
    <property type="project" value="UniProtKB-SubCell"/>
</dbReference>
<dbReference type="GO" id="GO:0030089">
    <property type="term" value="C:phycobilisome"/>
    <property type="evidence" value="ECO:0007669"/>
    <property type="project" value="InterPro"/>
</dbReference>
<dbReference type="GO" id="GO:0015979">
    <property type="term" value="P:photosynthesis"/>
    <property type="evidence" value="ECO:0007669"/>
    <property type="project" value="UniProtKB-KW"/>
</dbReference>
<dbReference type="Gene3D" id="3.90.510.10">
    <property type="entry name" value="Phycoerythrin alpha chain"/>
    <property type="match status" value="1"/>
</dbReference>
<dbReference type="InterPro" id="IPR011070">
    <property type="entry name" value="Globular_prot_asu/bsu"/>
</dbReference>
<dbReference type="InterPro" id="IPR037011">
    <property type="entry name" value="Phycoerythr-like_a_sf"/>
</dbReference>
<dbReference type="InterPro" id="IPR004228">
    <property type="entry name" value="Phycoerythr_a"/>
</dbReference>
<dbReference type="Pfam" id="PF02972">
    <property type="entry name" value="Phycoerythr_ab"/>
    <property type="match status" value="1"/>
</dbReference>
<dbReference type="SUPFAM" id="SSF56568">
    <property type="entry name" value="Non-globular alpha+beta subunits of globular proteins"/>
    <property type="match status" value="1"/>
</dbReference>
<feature type="chain" id="PRO_0000199210" description="Phycocyanin-645 alpha-2 chain">
    <location>
        <begin position="1"/>
        <end position="70"/>
    </location>
</feature>
<feature type="binding site" evidence="1">
    <location>
        <position position="16"/>
    </location>
    <ligand>
        <name>(2R,3E)-phycocyanobilin</name>
        <dbReference type="ChEBI" id="CHEBI:85275"/>
        <note>ligand shared with beta subunit</note>
    </ligand>
</feature>
<feature type="binding site" description="covalent" evidence="1">
    <location>
        <position position="18"/>
    </location>
    <ligand>
        <name>mesobiliverdin</name>
        <dbReference type="ChEBI" id="CHEBI:189061"/>
        <note>ligand shared with beta subunit</note>
    </ligand>
</feature>
<feature type="binding site" evidence="1">
    <location>
        <position position="26"/>
    </location>
    <ligand>
        <name>mesobiliverdin</name>
        <dbReference type="ChEBI" id="CHEBI:189061"/>
        <note>ligand shared with beta subunit</note>
    </ligand>
</feature>
<feature type="binding site" evidence="1">
    <location>
        <position position="41"/>
    </location>
    <ligand>
        <name>mesobiliverdin</name>
        <dbReference type="ChEBI" id="CHEBI:189061"/>
        <note>ligand shared with beta subunit</note>
    </ligand>
</feature>
<accession>P23815</accession>
<comment type="function">
    <text evidence="2">Light-harvesting photosynthetic tetrapyrrole chromophore-protein from the phycobiliprotein complex.</text>
</comment>
<comment type="subunit">
    <text evidence="1">Heterotetramer of 2 different alpha chains and 2 identical beta chains which form 2 alpha-beta heterodimers within the heterotetramer.</text>
</comment>
<comment type="subcellular location">
    <subcellularLocation>
        <location evidence="2">Plastid</location>
        <location evidence="2">Chloroplast thylakoid membrane</location>
        <topology evidence="2">Peripheral membrane protein</topology>
        <orientation evidence="2">Lumenal side</orientation>
    </subcellularLocation>
</comment>
<comment type="PTM">
    <text evidence="1">Contains one phycocyanobilin chromophore, one mesobiliverdin chromophore and one 15,16-dihydrobiliverdin chromophore with binding mediated by both the alpha and beta subunits.</text>
</comment>
<comment type="miscellaneous">
    <text>The light-harvesting system in Cryptophytes contains phycobiliprotein complexes. Unusually they are composed of either phycoerythrin (CPE) or phycocyanin (CPC) but never allophycocyanin (APC), with only one type of biliprotein being present in any one species. Unlike cyanobacteria or red algae these proteins are not arranged into higher-order phycobilisome complexes, and they are found in the thylakoid lumen.</text>
</comment>
<comment type="similarity">
    <text evidence="2">Belongs to the phycoerythrin family.</text>
</comment>
<reference key="1">
    <citation type="journal article" date="1990" name="Biol. Chem. Hoppe-Seyler">
        <title>The complete amino-acid sequence and the phylogenetic origin of phycocyanin-645 from the cryptophytan alga Chroomonas sp.</title>
        <authorList>
            <person name="Sidler W."/>
            <person name="Nutt H."/>
            <person name="Kumpf B."/>
            <person name="Frank G."/>
            <person name="Suter F."/>
            <person name="Brenzel A."/>
            <person name="Wehrmeyer W."/>
            <person name="Zuber H."/>
        </authorList>
    </citation>
    <scope>PROTEIN SEQUENCE</scope>
</reference>
<reference key="2">
    <citation type="journal article" date="1985" name="Biol. Chem. Hoppe-Seyler">
        <title>Structural studies on cryptomonad biliprotein subunits. Two different alpha-subunits in Chroomonas phycocyanin-645 and Cryptomonas phycoerythrin-545.</title>
        <authorList>
            <person name="Sidler W."/>
            <person name="Kumpf B."/>
            <person name="Suter F."/>
            <person name="Morisset W."/>
            <person name="Wehrmeyer W."/>
            <person name="Zuber H."/>
        </authorList>
    </citation>
    <scope>PROTEIN SEQUENCE OF 1-54</scope>
</reference>
<protein>
    <recommendedName>
        <fullName>Phycocyanin-645 alpha-2 chain</fullName>
        <shortName>PC-645</shortName>
    </recommendedName>
</protein>
<proteinExistence type="evidence at protein level"/>
<organism>
    <name type="scientific">Chroomonas sp</name>
    <dbReference type="NCBI Taxonomy" id="3029"/>
    <lineage>
        <taxon>Eukaryota</taxon>
        <taxon>Cryptophyceae</taxon>
        <taxon>Pyrenomonadales</taxon>
        <taxon>Chroomonadaceae</taxon>
        <taxon>Chroomonas</taxon>
    </lineage>
</organism>
<keyword id="KW-0089">Bile pigment</keyword>
<keyword id="KW-0150">Chloroplast</keyword>
<keyword id="KW-0157">Chromophore</keyword>
<keyword id="KW-0903">Direct protein sequencing</keyword>
<keyword id="KW-0249">Electron transport</keyword>
<keyword id="KW-0472">Membrane</keyword>
<keyword id="KW-0602">Photosynthesis</keyword>
<keyword id="KW-0934">Plastid</keyword>
<keyword id="KW-0793">Thylakoid</keyword>
<keyword id="KW-0813">Transport</keyword>
<name>PHEA2_CHRSP</name>
<sequence length="70" mass="7533">KNGDLRTPVITIFDARGCKDHANKEYTGPKAGGADDEMCVKVAMQKIAVAEDAAALVLKECLSELKARKK</sequence>